<feature type="chain" id="PRO_0000369603" description="Ribosome biogenesis protein YTM1">
    <location>
        <begin position="1"/>
        <end position="511"/>
    </location>
</feature>
<feature type="repeat" description="WD 1">
    <location>
        <begin position="124"/>
        <end position="168"/>
    </location>
</feature>
<feature type="repeat" description="WD 2">
    <location>
        <begin position="170"/>
        <end position="208"/>
    </location>
</feature>
<feature type="repeat" description="WD 3">
    <location>
        <begin position="248"/>
        <end position="287"/>
    </location>
</feature>
<feature type="repeat" description="WD 4">
    <location>
        <begin position="332"/>
        <end position="372"/>
    </location>
</feature>
<feature type="repeat" description="WD 5">
    <location>
        <begin position="383"/>
        <end position="423"/>
    </location>
</feature>
<feature type="repeat" description="WD 6">
    <location>
        <begin position="429"/>
        <end position="470"/>
    </location>
</feature>
<feature type="repeat" description="WD 7">
    <location>
        <begin position="477"/>
        <end position="511"/>
    </location>
</feature>
<feature type="region of interest" description="Ubiquitin-like (UBL) domain" evidence="2">
    <location>
        <begin position="9"/>
        <end position="112"/>
    </location>
</feature>
<feature type="region of interest" description="Sufficient for interaction with ERB1 and association with 66S pre-ribosomes" evidence="1">
    <location>
        <begin position="122"/>
        <end position="511"/>
    </location>
</feature>
<feature type="region of interest" description="Disordered" evidence="3">
    <location>
        <begin position="207"/>
        <end position="228"/>
    </location>
</feature>
<feature type="compositionally biased region" description="Basic and acidic residues" evidence="3">
    <location>
        <begin position="208"/>
        <end position="219"/>
    </location>
</feature>
<name>YTM1_YARLI</name>
<sequence>MTNQESQSVKVVFVTRDETLQPEAPLPPVMVPTSLKRLGLSEIVNQLLDTETPVPLDFLIVKATAGDGGASILDEESASSSSVLLRPGASLESFLADNGLSSEVSLSIEYIRSVLPPSFLASFSNPDWVAAVDINARWTGDLKPVIASGSYDGVVRLWDHSGHVTGQLVGHNSAAKAVRWISNDQLVSGGSDRLLYLWNPDGKKYRRKEPGQVGKKELNYDSEEDSDEEMLDELPAASTVTPMAALHGHTAPINDLAVHAKTGKIISASADGSVGLWSTDYNDMPAIEPHTAAAGGLTSTSAQKRRKLANSGSGATGLGAARQRGPLAVMGGHSAAVSAVAFHHSDPTVAYSVSLDHTIKTWDLATAEAVQSNAGSPDPSVDTRSTSFSLLSLCTLPQGLIACGSSARHITLHDPRVTAQVATQAKLVGHTNFVSSLSRGPESNPFLLASGSHDGTVRIWDVRTTKSLHVIHRETLTENNAVFGVDWKQNLGIVSGGQDNKIQINNNPQSA</sequence>
<dbReference type="EMBL" id="CR382128">
    <property type="protein sequence ID" value="CAG83046.1"/>
    <property type="molecule type" value="Genomic_DNA"/>
</dbReference>
<dbReference type="RefSeq" id="XP_500795.1">
    <property type="nucleotide sequence ID" value="XM_500795.1"/>
</dbReference>
<dbReference type="SMR" id="Q6CEW7"/>
<dbReference type="FunCoup" id="Q6CEW7">
    <property type="interactions" value="951"/>
</dbReference>
<dbReference type="STRING" id="284591.Q6CEW7"/>
<dbReference type="EnsemblFungi" id="CAG83046">
    <property type="protein sequence ID" value="CAG83046"/>
    <property type="gene ID" value="YALI0_B12320g"/>
</dbReference>
<dbReference type="KEGG" id="yli:2907122"/>
<dbReference type="VEuPathDB" id="FungiDB:YALI0_B12320g"/>
<dbReference type="HOGENOM" id="CLU_000288_57_0_1"/>
<dbReference type="InParanoid" id="Q6CEW7"/>
<dbReference type="OMA" id="DHKYVEF"/>
<dbReference type="OrthoDB" id="116272at4891"/>
<dbReference type="Proteomes" id="UP000001300">
    <property type="component" value="Chromosome B"/>
</dbReference>
<dbReference type="GO" id="GO:0005654">
    <property type="term" value="C:nucleoplasm"/>
    <property type="evidence" value="ECO:0007669"/>
    <property type="project" value="UniProtKB-SubCell"/>
</dbReference>
<dbReference type="GO" id="GO:0070545">
    <property type="term" value="C:PeBoW complex"/>
    <property type="evidence" value="ECO:0000318"/>
    <property type="project" value="GO_Central"/>
</dbReference>
<dbReference type="GO" id="GO:0030687">
    <property type="term" value="C:preribosome, large subunit precursor"/>
    <property type="evidence" value="ECO:0000318"/>
    <property type="project" value="GO_Central"/>
</dbReference>
<dbReference type="GO" id="GO:0043021">
    <property type="term" value="F:ribonucleoprotein complex binding"/>
    <property type="evidence" value="ECO:0007669"/>
    <property type="project" value="UniProtKB-UniRule"/>
</dbReference>
<dbReference type="GO" id="GO:0000466">
    <property type="term" value="P:maturation of 5.8S rRNA from tricistronic rRNA transcript (SSU-rRNA, 5.8S rRNA, LSU-rRNA)"/>
    <property type="evidence" value="ECO:0007669"/>
    <property type="project" value="UniProtKB-UniRule"/>
</dbReference>
<dbReference type="GO" id="GO:0000463">
    <property type="term" value="P:maturation of LSU-rRNA from tricistronic rRNA transcript (SSU-rRNA, 5.8S rRNA, LSU-rRNA)"/>
    <property type="evidence" value="ECO:0007669"/>
    <property type="project" value="UniProtKB-UniRule"/>
</dbReference>
<dbReference type="GO" id="GO:0042273">
    <property type="term" value="P:ribosomal large subunit biogenesis"/>
    <property type="evidence" value="ECO:0000318"/>
    <property type="project" value="GO_Central"/>
</dbReference>
<dbReference type="CDD" id="cd00200">
    <property type="entry name" value="WD40"/>
    <property type="match status" value="1"/>
</dbReference>
<dbReference type="FunFam" id="2.130.10.10:FF:000706">
    <property type="entry name" value="Ribosome biogenesis protein YTM1"/>
    <property type="match status" value="1"/>
</dbReference>
<dbReference type="Gene3D" id="2.130.10.10">
    <property type="entry name" value="YVTN repeat-like/Quinoprotein amine dehydrogenase"/>
    <property type="match status" value="1"/>
</dbReference>
<dbReference type="HAMAP" id="MF_03029">
    <property type="entry name" value="WDR12"/>
    <property type="match status" value="1"/>
</dbReference>
<dbReference type="InterPro" id="IPR020472">
    <property type="entry name" value="G-protein_beta_WD-40_rep"/>
</dbReference>
<dbReference type="InterPro" id="IPR012972">
    <property type="entry name" value="NLE"/>
</dbReference>
<dbReference type="InterPro" id="IPR015943">
    <property type="entry name" value="WD40/YVTN_repeat-like_dom_sf"/>
</dbReference>
<dbReference type="InterPro" id="IPR019775">
    <property type="entry name" value="WD40_repeat_CS"/>
</dbReference>
<dbReference type="InterPro" id="IPR036322">
    <property type="entry name" value="WD40_repeat_dom_sf"/>
</dbReference>
<dbReference type="InterPro" id="IPR001680">
    <property type="entry name" value="WD40_rpt"/>
</dbReference>
<dbReference type="InterPro" id="IPR028599">
    <property type="entry name" value="WDR12/Ytm1"/>
</dbReference>
<dbReference type="PANTHER" id="PTHR19855:SF11">
    <property type="entry name" value="RIBOSOME BIOGENESIS PROTEIN WDR12"/>
    <property type="match status" value="1"/>
</dbReference>
<dbReference type="PANTHER" id="PTHR19855">
    <property type="entry name" value="WD40 REPEAT PROTEIN 12, 37"/>
    <property type="match status" value="1"/>
</dbReference>
<dbReference type="Pfam" id="PF08154">
    <property type="entry name" value="NLE"/>
    <property type="match status" value="1"/>
</dbReference>
<dbReference type="Pfam" id="PF00400">
    <property type="entry name" value="WD40"/>
    <property type="match status" value="5"/>
</dbReference>
<dbReference type="PRINTS" id="PR00320">
    <property type="entry name" value="GPROTEINBRPT"/>
</dbReference>
<dbReference type="SMART" id="SM00320">
    <property type="entry name" value="WD40"/>
    <property type="match status" value="7"/>
</dbReference>
<dbReference type="SUPFAM" id="SSF50978">
    <property type="entry name" value="WD40 repeat-like"/>
    <property type="match status" value="1"/>
</dbReference>
<dbReference type="PROSITE" id="PS00678">
    <property type="entry name" value="WD_REPEATS_1"/>
    <property type="match status" value="2"/>
</dbReference>
<dbReference type="PROSITE" id="PS50082">
    <property type="entry name" value="WD_REPEATS_2"/>
    <property type="match status" value="5"/>
</dbReference>
<dbReference type="PROSITE" id="PS50294">
    <property type="entry name" value="WD_REPEATS_REGION"/>
    <property type="match status" value="2"/>
</dbReference>
<keyword id="KW-0539">Nucleus</keyword>
<keyword id="KW-1185">Reference proteome</keyword>
<keyword id="KW-0677">Repeat</keyword>
<keyword id="KW-0690">Ribosome biogenesis</keyword>
<keyword id="KW-0698">rRNA processing</keyword>
<keyword id="KW-0853">WD repeat</keyword>
<accession>Q6CEW7</accession>
<reference key="1">
    <citation type="journal article" date="2004" name="Nature">
        <title>Genome evolution in yeasts.</title>
        <authorList>
            <person name="Dujon B."/>
            <person name="Sherman D."/>
            <person name="Fischer G."/>
            <person name="Durrens P."/>
            <person name="Casaregola S."/>
            <person name="Lafontaine I."/>
            <person name="de Montigny J."/>
            <person name="Marck C."/>
            <person name="Neuveglise C."/>
            <person name="Talla E."/>
            <person name="Goffard N."/>
            <person name="Frangeul L."/>
            <person name="Aigle M."/>
            <person name="Anthouard V."/>
            <person name="Babour A."/>
            <person name="Barbe V."/>
            <person name="Barnay S."/>
            <person name="Blanchin S."/>
            <person name="Beckerich J.-M."/>
            <person name="Beyne E."/>
            <person name="Bleykasten C."/>
            <person name="Boisrame A."/>
            <person name="Boyer J."/>
            <person name="Cattolico L."/>
            <person name="Confanioleri F."/>
            <person name="de Daruvar A."/>
            <person name="Despons L."/>
            <person name="Fabre E."/>
            <person name="Fairhead C."/>
            <person name="Ferry-Dumazet H."/>
            <person name="Groppi A."/>
            <person name="Hantraye F."/>
            <person name="Hennequin C."/>
            <person name="Jauniaux N."/>
            <person name="Joyet P."/>
            <person name="Kachouri R."/>
            <person name="Kerrest A."/>
            <person name="Koszul R."/>
            <person name="Lemaire M."/>
            <person name="Lesur I."/>
            <person name="Ma L."/>
            <person name="Muller H."/>
            <person name="Nicaud J.-M."/>
            <person name="Nikolski M."/>
            <person name="Oztas S."/>
            <person name="Ozier-Kalogeropoulos O."/>
            <person name="Pellenz S."/>
            <person name="Potier S."/>
            <person name="Richard G.-F."/>
            <person name="Straub M.-L."/>
            <person name="Suleau A."/>
            <person name="Swennen D."/>
            <person name="Tekaia F."/>
            <person name="Wesolowski-Louvel M."/>
            <person name="Westhof E."/>
            <person name="Wirth B."/>
            <person name="Zeniou-Meyer M."/>
            <person name="Zivanovic Y."/>
            <person name="Bolotin-Fukuhara M."/>
            <person name="Thierry A."/>
            <person name="Bouchier C."/>
            <person name="Caudron B."/>
            <person name="Scarpelli C."/>
            <person name="Gaillardin C."/>
            <person name="Weissenbach J."/>
            <person name="Wincker P."/>
            <person name="Souciet J.-L."/>
        </authorList>
    </citation>
    <scope>NUCLEOTIDE SEQUENCE [LARGE SCALE GENOMIC DNA]</scope>
    <source>
        <strain>CLIB 122 / E 150</strain>
    </source>
</reference>
<organism>
    <name type="scientific">Yarrowia lipolytica (strain CLIB 122 / E 150)</name>
    <name type="common">Yeast</name>
    <name type="synonym">Candida lipolytica</name>
    <dbReference type="NCBI Taxonomy" id="284591"/>
    <lineage>
        <taxon>Eukaryota</taxon>
        <taxon>Fungi</taxon>
        <taxon>Dikarya</taxon>
        <taxon>Ascomycota</taxon>
        <taxon>Saccharomycotina</taxon>
        <taxon>Dipodascomycetes</taxon>
        <taxon>Dipodascales</taxon>
        <taxon>Dipodascales incertae sedis</taxon>
        <taxon>Yarrowia</taxon>
    </lineage>
</organism>
<evidence type="ECO:0000250" key="1"/>
<evidence type="ECO:0000255" key="2">
    <source>
        <dbReference type="HAMAP-Rule" id="MF_03029"/>
    </source>
</evidence>
<evidence type="ECO:0000256" key="3">
    <source>
        <dbReference type="SAM" id="MobiDB-lite"/>
    </source>
</evidence>
<proteinExistence type="inferred from homology"/>
<protein>
    <recommendedName>
        <fullName evidence="2">Ribosome biogenesis protein YTM1</fullName>
    </recommendedName>
</protein>
<comment type="function">
    <text evidence="2">Component of the NOP7 complex, which is required for maturation of the 25S and 5.8S ribosomal RNAs and formation of the 60S ribosome.</text>
</comment>
<comment type="subunit">
    <text evidence="2">Component of the NOP7 complex, composed of ERB1, NOP7 and YTM1. The complex is held together by ERB1, which interacts with NOP7 via its N-terminal domain and with YTM1 via a high-affinity interaction between the seven-bladed beta-propeller domains of the 2 proteins. The NOP7 complex associates with the 66S pre-ribosome. Interacts (via UBL domain) with MDN1 (via VWFA/MIDAS domain).</text>
</comment>
<comment type="subcellular location">
    <subcellularLocation>
        <location evidence="2">Nucleus</location>
        <location evidence="2">Nucleolus</location>
    </subcellularLocation>
    <subcellularLocation>
        <location evidence="2">Nucleus</location>
        <location evidence="2">Nucleoplasm</location>
    </subcellularLocation>
</comment>
<comment type="similarity">
    <text evidence="2">Belongs to the WD repeat WDR12/YTM1 family.</text>
</comment>
<gene>
    <name evidence="2" type="primary">YTM1</name>
    <name type="ordered locus">YALI0B12320g</name>
</gene>